<feature type="chain" id="PRO_0000190167" description="Lipid-A-disaccharide synthase">
    <location>
        <begin position="1"/>
        <end position="390"/>
    </location>
</feature>
<sequence length="390" mass="43621">MSKDSPLIALVAGEISGDILGAGLINALKIHYPNARFIGVAGPQMIQAGCQTLFDMEELAVMGLAEVVKHLPRLLKRRKQVIQTMLQQQPDIFIGIDAPDFNLTIEQKLKAKGITTIHYVSPSVWAWRQDRIHKIKRATNLVLAFLPFEKAFYDRFNVACRFIGHTMADAIALKPNRTEACQILNIDENQRYLAILAGSRASEVDFLAEPFLKAALLLKQKYPDLQCLVPLVNQQRIQQFEQIKARVAPSLPVKILKGNARQAMIAADATLLASGTAALEAMLCKSPMVVGYKLKPTSYWLAKRLIKTKYISLPNLLADDMLVPELIQDECNPENLAWYLGNYLADDIDNKKQQNELKQRFTDLHKMIQCDADSKAAQAVIDLLANSDDQ</sequence>
<accession>Q7VMW5</accession>
<organism>
    <name type="scientific">Haemophilus ducreyi (strain 35000HP / ATCC 700724)</name>
    <dbReference type="NCBI Taxonomy" id="233412"/>
    <lineage>
        <taxon>Bacteria</taxon>
        <taxon>Pseudomonadati</taxon>
        <taxon>Pseudomonadota</taxon>
        <taxon>Gammaproteobacteria</taxon>
        <taxon>Pasteurellales</taxon>
        <taxon>Pasteurellaceae</taxon>
        <taxon>Haemophilus</taxon>
    </lineage>
</organism>
<evidence type="ECO:0000255" key="1">
    <source>
        <dbReference type="HAMAP-Rule" id="MF_00392"/>
    </source>
</evidence>
<name>LPXB_HAEDU</name>
<reference key="1">
    <citation type="submission" date="2003-06" db="EMBL/GenBank/DDBJ databases">
        <title>The complete genome sequence of Haemophilus ducreyi.</title>
        <authorList>
            <person name="Munson R.S. Jr."/>
            <person name="Ray W.C."/>
            <person name="Mahairas G."/>
            <person name="Sabo P."/>
            <person name="Mungur R."/>
            <person name="Johnson L."/>
            <person name="Nguyen D."/>
            <person name="Wang J."/>
            <person name="Forst C."/>
            <person name="Hood L."/>
        </authorList>
    </citation>
    <scope>NUCLEOTIDE SEQUENCE [LARGE SCALE GENOMIC DNA]</scope>
    <source>
        <strain>35000HP / ATCC 700724</strain>
    </source>
</reference>
<comment type="function">
    <text evidence="1">Condensation of UDP-2,3-diacylglucosamine and 2,3-diacylglucosamine-1-phosphate to form lipid A disaccharide, a precursor of lipid A, a phosphorylated glycolipid that anchors the lipopolysaccharide to the outer membrane of the cell.</text>
</comment>
<comment type="catalytic activity">
    <reaction evidence="1">
        <text>a lipid X + a UDP-2-N,3-O-bis[(3R)-3-hydroxyacyl]-alpha-D-glucosamine = a lipid A disaccharide + UDP + H(+)</text>
        <dbReference type="Rhea" id="RHEA:67828"/>
        <dbReference type="ChEBI" id="CHEBI:15378"/>
        <dbReference type="ChEBI" id="CHEBI:58223"/>
        <dbReference type="ChEBI" id="CHEBI:137748"/>
        <dbReference type="ChEBI" id="CHEBI:176338"/>
        <dbReference type="ChEBI" id="CHEBI:176343"/>
        <dbReference type="EC" id="2.4.1.182"/>
    </reaction>
</comment>
<comment type="pathway">
    <text evidence="1">Bacterial outer membrane biogenesis; LPS lipid A biosynthesis.</text>
</comment>
<comment type="similarity">
    <text evidence="1">Belongs to the LpxB family.</text>
</comment>
<keyword id="KW-0328">Glycosyltransferase</keyword>
<keyword id="KW-0441">Lipid A biosynthesis</keyword>
<keyword id="KW-0444">Lipid biosynthesis</keyword>
<keyword id="KW-0443">Lipid metabolism</keyword>
<keyword id="KW-1185">Reference proteome</keyword>
<keyword id="KW-0808">Transferase</keyword>
<gene>
    <name evidence="1" type="primary">lpxB</name>
    <name type="ordered locus">HD_0846</name>
</gene>
<dbReference type="EC" id="2.4.1.182" evidence="1"/>
<dbReference type="EMBL" id="AE017143">
    <property type="protein sequence ID" value="AAP95737.1"/>
    <property type="molecule type" value="Genomic_DNA"/>
</dbReference>
<dbReference type="RefSeq" id="WP_010944787.1">
    <property type="nucleotide sequence ID" value="NC_002940.2"/>
</dbReference>
<dbReference type="SMR" id="Q7VMW5"/>
<dbReference type="STRING" id="233412.HD_0846"/>
<dbReference type="CAZy" id="GT19">
    <property type="family name" value="Glycosyltransferase Family 19"/>
</dbReference>
<dbReference type="KEGG" id="hdu:HD_0846"/>
<dbReference type="eggNOG" id="COG0763">
    <property type="taxonomic scope" value="Bacteria"/>
</dbReference>
<dbReference type="HOGENOM" id="CLU_036577_3_0_6"/>
<dbReference type="OrthoDB" id="9801642at2"/>
<dbReference type="UniPathway" id="UPA00973"/>
<dbReference type="Proteomes" id="UP000001022">
    <property type="component" value="Chromosome"/>
</dbReference>
<dbReference type="GO" id="GO:0016020">
    <property type="term" value="C:membrane"/>
    <property type="evidence" value="ECO:0007669"/>
    <property type="project" value="GOC"/>
</dbReference>
<dbReference type="GO" id="GO:0008915">
    <property type="term" value="F:lipid-A-disaccharide synthase activity"/>
    <property type="evidence" value="ECO:0007669"/>
    <property type="project" value="UniProtKB-UniRule"/>
</dbReference>
<dbReference type="GO" id="GO:0005543">
    <property type="term" value="F:phospholipid binding"/>
    <property type="evidence" value="ECO:0007669"/>
    <property type="project" value="TreeGrafter"/>
</dbReference>
<dbReference type="GO" id="GO:0009245">
    <property type="term" value="P:lipid A biosynthetic process"/>
    <property type="evidence" value="ECO:0007669"/>
    <property type="project" value="UniProtKB-UniRule"/>
</dbReference>
<dbReference type="HAMAP" id="MF_00392">
    <property type="entry name" value="LpxB"/>
    <property type="match status" value="1"/>
</dbReference>
<dbReference type="InterPro" id="IPR003835">
    <property type="entry name" value="Glyco_trans_19"/>
</dbReference>
<dbReference type="NCBIfam" id="TIGR00215">
    <property type="entry name" value="lpxB"/>
    <property type="match status" value="1"/>
</dbReference>
<dbReference type="PANTHER" id="PTHR30372">
    <property type="entry name" value="LIPID-A-DISACCHARIDE SYNTHASE"/>
    <property type="match status" value="1"/>
</dbReference>
<dbReference type="PANTHER" id="PTHR30372:SF4">
    <property type="entry name" value="LIPID-A-DISACCHARIDE SYNTHASE, MITOCHONDRIAL-RELATED"/>
    <property type="match status" value="1"/>
</dbReference>
<dbReference type="Pfam" id="PF02684">
    <property type="entry name" value="LpxB"/>
    <property type="match status" value="1"/>
</dbReference>
<dbReference type="SUPFAM" id="SSF53756">
    <property type="entry name" value="UDP-Glycosyltransferase/glycogen phosphorylase"/>
    <property type="match status" value="1"/>
</dbReference>
<proteinExistence type="inferred from homology"/>
<protein>
    <recommendedName>
        <fullName evidence="1">Lipid-A-disaccharide synthase</fullName>
        <ecNumber evidence="1">2.4.1.182</ecNumber>
    </recommendedName>
</protein>